<feature type="chain" id="PRO_1000190502" description="Glutamyl-tRNA reductase">
    <location>
        <begin position="1"/>
        <end position="444"/>
    </location>
</feature>
<feature type="active site" description="Nucleophile" evidence="1">
    <location>
        <position position="50"/>
    </location>
</feature>
<feature type="binding site" evidence="1">
    <location>
        <begin position="49"/>
        <end position="52"/>
    </location>
    <ligand>
        <name>substrate</name>
    </ligand>
</feature>
<feature type="binding site" evidence="1">
    <location>
        <position position="109"/>
    </location>
    <ligand>
        <name>substrate</name>
    </ligand>
</feature>
<feature type="binding site" evidence="1">
    <location>
        <begin position="114"/>
        <end position="116"/>
    </location>
    <ligand>
        <name>substrate</name>
    </ligand>
</feature>
<feature type="binding site" evidence="1">
    <location>
        <position position="120"/>
    </location>
    <ligand>
        <name>substrate</name>
    </ligand>
</feature>
<feature type="binding site" evidence="1">
    <location>
        <begin position="189"/>
        <end position="194"/>
    </location>
    <ligand>
        <name>NADP(+)</name>
        <dbReference type="ChEBI" id="CHEBI:58349"/>
    </ligand>
</feature>
<feature type="site" description="Important for activity" evidence="1">
    <location>
        <position position="99"/>
    </location>
</feature>
<sequence>MHILVVSVNYRTAPVEFREKLTFQAAELERAMTTLQNQKSVLENVIVSTCNRTEIYAVVDQLHTGRYYIKKFLADWFQLEIEEVAPYLTIFEQDGAIDHLFRVTCGLDSMVVGETQILGQIKDSFLEAQQVKATGTIFNELFKQVITLAKRAHSETTIGESAMSVSYAAVELGKKIFGELTDCHVLILGAGKMGELALQNLYGSGARKVTVMNRTLSKAEIMAEKYMGHAKPLSELQCALLEADILISSTGASDYVITKEMMTKVEKMRSGRPLFMVDIAVPRDIDPAIDELEGSFLYDIDDLQGVVEANRAERLKEAEKIQFMIEEEIVLFKTWLSTLGVVPLISALRDKALAIQSETMESLERKIPNLSDRERKVISKHTKSIINQLLKDPILVAKEIAAEEGADEKLALFAKIFDLEMEDVESRAEEVEHKRVWTPSVPSL</sequence>
<name>HEM1_BACAC</name>
<accession>C3L6Z7</accession>
<organism>
    <name type="scientific">Bacillus anthracis (strain CDC 684 / NRRL 3495)</name>
    <dbReference type="NCBI Taxonomy" id="568206"/>
    <lineage>
        <taxon>Bacteria</taxon>
        <taxon>Bacillati</taxon>
        <taxon>Bacillota</taxon>
        <taxon>Bacilli</taxon>
        <taxon>Bacillales</taxon>
        <taxon>Bacillaceae</taxon>
        <taxon>Bacillus</taxon>
        <taxon>Bacillus cereus group</taxon>
    </lineage>
</organism>
<dbReference type="EC" id="1.2.1.70" evidence="1"/>
<dbReference type="EMBL" id="CP001215">
    <property type="protein sequence ID" value="ACP15465.1"/>
    <property type="molecule type" value="Genomic_DNA"/>
</dbReference>
<dbReference type="RefSeq" id="WP_000547860.1">
    <property type="nucleotide sequence ID" value="NC_012581.1"/>
</dbReference>
<dbReference type="SMR" id="C3L6Z7"/>
<dbReference type="GeneID" id="45024338"/>
<dbReference type="KEGG" id="bah:BAMEG_4733"/>
<dbReference type="HOGENOM" id="CLU_035113_2_2_9"/>
<dbReference type="UniPathway" id="UPA00251">
    <property type="reaction ID" value="UER00316"/>
</dbReference>
<dbReference type="GO" id="GO:0008883">
    <property type="term" value="F:glutamyl-tRNA reductase activity"/>
    <property type="evidence" value="ECO:0007669"/>
    <property type="project" value="UniProtKB-UniRule"/>
</dbReference>
<dbReference type="GO" id="GO:0050661">
    <property type="term" value="F:NADP binding"/>
    <property type="evidence" value="ECO:0007669"/>
    <property type="project" value="InterPro"/>
</dbReference>
<dbReference type="GO" id="GO:0006782">
    <property type="term" value="P:protoporphyrinogen IX biosynthetic process"/>
    <property type="evidence" value="ECO:0007669"/>
    <property type="project" value="UniProtKB-UniRule"/>
</dbReference>
<dbReference type="CDD" id="cd05213">
    <property type="entry name" value="NAD_bind_Glutamyl_tRNA_reduct"/>
    <property type="match status" value="1"/>
</dbReference>
<dbReference type="FunFam" id="3.30.460.30:FF:000001">
    <property type="entry name" value="Glutamyl-tRNA reductase"/>
    <property type="match status" value="1"/>
</dbReference>
<dbReference type="FunFam" id="3.40.50.720:FF:000031">
    <property type="entry name" value="Glutamyl-tRNA reductase"/>
    <property type="match status" value="1"/>
</dbReference>
<dbReference type="Gene3D" id="3.30.460.30">
    <property type="entry name" value="Glutamyl-tRNA reductase, N-terminal domain"/>
    <property type="match status" value="1"/>
</dbReference>
<dbReference type="Gene3D" id="3.40.50.720">
    <property type="entry name" value="NAD(P)-binding Rossmann-like Domain"/>
    <property type="match status" value="1"/>
</dbReference>
<dbReference type="HAMAP" id="MF_00087">
    <property type="entry name" value="Glu_tRNA_reductase"/>
    <property type="match status" value="1"/>
</dbReference>
<dbReference type="InterPro" id="IPR000343">
    <property type="entry name" value="4pyrrol_synth_GluRdtase"/>
</dbReference>
<dbReference type="InterPro" id="IPR015896">
    <property type="entry name" value="4pyrrol_synth_GluRdtase_dimer"/>
</dbReference>
<dbReference type="InterPro" id="IPR015895">
    <property type="entry name" value="4pyrrol_synth_GluRdtase_N"/>
</dbReference>
<dbReference type="InterPro" id="IPR018214">
    <property type="entry name" value="GluRdtase_CS"/>
</dbReference>
<dbReference type="InterPro" id="IPR036453">
    <property type="entry name" value="GluRdtase_dimer_dom_sf"/>
</dbReference>
<dbReference type="InterPro" id="IPR036343">
    <property type="entry name" value="GluRdtase_N_sf"/>
</dbReference>
<dbReference type="InterPro" id="IPR036291">
    <property type="entry name" value="NAD(P)-bd_dom_sf"/>
</dbReference>
<dbReference type="InterPro" id="IPR006151">
    <property type="entry name" value="Shikm_DH/Glu-tRNA_Rdtase"/>
</dbReference>
<dbReference type="NCBIfam" id="TIGR01035">
    <property type="entry name" value="hemA"/>
    <property type="match status" value="1"/>
</dbReference>
<dbReference type="PANTHER" id="PTHR43120">
    <property type="entry name" value="GLUTAMYL-TRNA REDUCTASE 1, CHLOROPLASTIC"/>
    <property type="match status" value="1"/>
</dbReference>
<dbReference type="PANTHER" id="PTHR43120:SF1">
    <property type="entry name" value="GLUTAMYL-TRNA REDUCTASE 1, CHLOROPLASTIC"/>
    <property type="match status" value="1"/>
</dbReference>
<dbReference type="Pfam" id="PF00745">
    <property type="entry name" value="GlutR_dimer"/>
    <property type="match status" value="1"/>
</dbReference>
<dbReference type="Pfam" id="PF05201">
    <property type="entry name" value="GlutR_N"/>
    <property type="match status" value="1"/>
</dbReference>
<dbReference type="Pfam" id="PF01488">
    <property type="entry name" value="Shikimate_DH"/>
    <property type="match status" value="1"/>
</dbReference>
<dbReference type="PIRSF" id="PIRSF000445">
    <property type="entry name" value="4pyrrol_synth_GluRdtase"/>
    <property type="match status" value="1"/>
</dbReference>
<dbReference type="SUPFAM" id="SSF69742">
    <property type="entry name" value="Glutamyl tRNA-reductase catalytic, N-terminal domain"/>
    <property type="match status" value="1"/>
</dbReference>
<dbReference type="SUPFAM" id="SSF69075">
    <property type="entry name" value="Glutamyl tRNA-reductase dimerization domain"/>
    <property type="match status" value="1"/>
</dbReference>
<dbReference type="SUPFAM" id="SSF51735">
    <property type="entry name" value="NAD(P)-binding Rossmann-fold domains"/>
    <property type="match status" value="1"/>
</dbReference>
<dbReference type="PROSITE" id="PS00747">
    <property type="entry name" value="GLUTR"/>
    <property type="match status" value="1"/>
</dbReference>
<evidence type="ECO:0000255" key="1">
    <source>
        <dbReference type="HAMAP-Rule" id="MF_00087"/>
    </source>
</evidence>
<gene>
    <name evidence="1" type="primary">hemA</name>
    <name type="ordered locus">BAMEG_4733</name>
</gene>
<protein>
    <recommendedName>
        <fullName evidence="1">Glutamyl-tRNA reductase</fullName>
        <shortName evidence="1">GluTR</shortName>
        <ecNumber evidence="1">1.2.1.70</ecNumber>
    </recommendedName>
</protein>
<reference key="1">
    <citation type="submission" date="2008-10" db="EMBL/GenBank/DDBJ databases">
        <title>Genome sequence of Bacillus anthracis str. CDC 684.</title>
        <authorList>
            <person name="Dodson R.J."/>
            <person name="Munk A.C."/>
            <person name="Brettin T."/>
            <person name="Bruce D."/>
            <person name="Detter C."/>
            <person name="Tapia R."/>
            <person name="Han C."/>
            <person name="Sutton G."/>
            <person name="Sims D."/>
        </authorList>
    </citation>
    <scope>NUCLEOTIDE SEQUENCE [LARGE SCALE GENOMIC DNA]</scope>
    <source>
        <strain>CDC 684 / NRRL 3495</strain>
    </source>
</reference>
<keyword id="KW-0521">NADP</keyword>
<keyword id="KW-0560">Oxidoreductase</keyword>
<keyword id="KW-0627">Porphyrin biosynthesis</keyword>
<proteinExistence type="inferred from homology"/>
<comment type="function">
    <text evidence="1">Catalyzes the NADPH-dependent reduction of glutamyl-tRNA(Glu) to glutamate 1-semialdehyde (GSA).</text>
</comment>
<comment type="catalytic activity">
    <reaction evidence="1">
        <text>(S)-4-amino-5-oxopentanoate + tRNA(Glu) + NADP(+) = L-glutamyl-tRNA(Glu) + NADPH + H(+)</text>
        <dbReference type="Rhea" id="RHEA:12344"/>
        <dbReference type="Rhea" id="RHEA-COMP:9663"/>
        <dbReference type="Rhea" id="RHEA-COMP:9680"/>
        <dbReference type="ChEBI" id="CHEBI:15378"/>
        <dbReference type="ChEBI" id="CHEBI:57501"/>
        <dbReference type="ChEBI" id="CHEBI:57783"/>
        <dbReference type="ChEBI" id="CHEBI:58349"/>
        <dbReference type="ChEBI" id="CHEBI:78442"/>
        <dbReference type="ChEBI" id="CHEBI:78520"/>
        <dbReference type="EC" id="1.2.1.70"/>
    </reaction>
</comment>
<comment type="pathway">
    <text evidence="1">Porphyrin-containing compound metabolism; protoporphyrin-IX biosynthesis; 5-aminolevulinate from L-glutamyl-tRNA(Glu): step 1/2.</text>
</comment>
<comment type="subunit">
    <text evidence="1">Homodimer.</text>
</comment>
<comment type="domain">
    <text evidence="1">Possesses an unusual extended V-shaped dimeric structure with each monomer consisting of three distinct domains arranged along a curved 'spinal' alpha-helix. The N-terminal catalytic domain specifically recognizes the glutamate moiety of the substrate. The second domain is the NADPH-binding domain, and the third C-terminal domain is responsible for dimerization.</text>
</comment>
<comment type="miscellaneous">
    <text evidence="1">During catalysis, the active site Cys acts as a nucleophile attacking the alpha-carbonyl group of tRNA-bound glutamate with the formation of a thioester intermediate between enzyme and glutamate, and the concomitant release of tRNA(Glu). The thioester intermediate is finally reduced by direct hydride transfer from NADPH, to form the product GSA.</text>
</comment>
<comment type="similarity">
    <text evidence="1">Belongs to the glutamyl-tRNA reductase family.</text>
</comment>